<reference key="1">
    <citation type="journal article" date="2009" name="Genome Res.">
        <title>Comparative genomic analyses of the human fungal pathogens Coccidioides and their relatives.</title>
        <authorList>
            <person name="Sharpton T.J."/>
            <person name="Stajich J.E."/>
            <person name="Rounsley S.D."/>
            <person name="Gardner M.J."/>
            <person name="Wortman J.R."/>
            <person name="Jordar V.S."/>
            <person name="Maiti R."/>
            <person name="Kodira C.D."/>
            <person name="Neafsey D.E."/>
            <person name="Zeng Q."/>
            <person name="Hung C.-Y."/>
            <person name="McMahan C."/>
            <person name="Muszewska A."/>
            <person name="Grynberg M."/>
            <person name="Mandel M.A."/>
            <person name="Kellner E.M."/>
            <person name="Barker B.M."/>
            <person name="Galgiani J.N."/>
            <person name="Orbach M.J."/>
            <person name="Kirkland T.N."/>
            <person name="Cole G.T."/>
            <person name="Henn M.R."/>
            <person name="Birren B.W."/>
            <person name="Taylor J.W."/>
        </authorList>
    </citation>
    <scope>NUCLEOTIDE SEQUENCE [LARGE SCALE GENOMIC DNA]</scope>
    <source>
        <strain>RS</strain>
    </source>
</reference>
<reference key="2">
    <citation type="journal article" date="2010" name="Genome Res.">
        <title>Population genomic sequencing of Coccidioides fungi reveals recent hybridization and transposon control.</title>
        <authorList>
            <person name="Neafsey D.E."/>
            <person name="Barker B.M."/>
            <person name="Sharpton T.J."/>
            <person name="Stajich J.E."/>
            <person name="Park D.J."/>
            <person name="Whiston E."/>
            <person name="Hung C.-Y."/>
            <person name="McMahan C."/>
            <person name="White J."/>
            <person name="Sykes S."/>
            <person name="Heiman D."/>
            <person name="Young S."/>
            <person name="Zeng Q."/>
            <person name="Abouelleil A."/>
            <person name="Aftuck L."/>
            <person name="Bessette D."/>
            <person name="Brown A."/>
            <person name="FitzGerald M."/>
            <person name="Lui A."/>
            <person name="Macdonald J.P."/>
            <person name="Priest M."/>
            <person name="Orbach M.J."/>
            <person name="Galgiani J.N."/>
            <person name="Kirkland T.N."/>
            <person name="Cole G.T."/>
            <person name="Birren B.W."/>
            <person name="Henn M.R."/>
            <person name="Taylor J.W."/>
            <person name="Rounsley S.D."/>
        </authorList>
    </citation>
    <scope>GENOME REANNOTATION</scope>
    <source>
        <strain>RS</strain>
    </source>
</reference>
<keyword id="KW-0963">Cytoplasm</keyword>
<keyword id="KW-0396">Initiation factor</keyword>
<keyword id="KW-0648">Protein biosynthesis</keyword>
<keyword id="KW-1185">Reference proteome</keyword>
<keyword id="KW-0694">RNA-binding</keyword>
<proteinExistence type="inferred from homology"/>
<dbReference type="EMBL" id="GG704913">
    <property type="protein sequence ID" value="EAS29078.3"/>
    <property type="molecule type" value="Genomic_DNA"/>
</dbReference>
<dbReference type="RefSeq" id="XP_001240661.2">
    <property type="nucleotide sequence ID" value="XM_001240660.2"/>
</dbReference>
<dbReference type="SMR" id="Q1DPD9"/>
<dbReference type="FunCoup" id="Q1DPD9">
    <property type="interactions" value="1062"/>
</dbReference>
<dbReference type="STRING" id="246410.Q1DPD9"/>
<dbReference type="GeneID" id="4560225"/>
<dbReference type="KEGG" id="cim:CIMG_07824"/>
<dbReference type="VEuPathDB" id="FungiDB:CIMG_07824"/>
<dbReference type="InParanoid" id="Q1DPD9"/>
<dbReference type="OMA" id="ICQGDHF"/>
<dbReference type="OrthoDB" id="639027at2759"/>
<dbReference type="Proteomes" id="UP000001261">
    <property type="component" value="Unassembled WGS sequence"/>
</dbReference>
<dbReference type="GO" id="GO:0016282">
    <property type="term" value="C:eukaryotic 43S preinitiation complex"/>
    <property type="evidence" value="ECO:0007669"/>
    <property type="project" value="UniProtKB-UniRule"/>
</dbReference>
<dbReference type="GO" id="GO:0033290">
    <property type="term" value="C:eukaryotic 48S preinitiation complex"/>
    <property type="evidence" value="ECO:0007669"/>
    <property type="project" value="UniProtKB-UniRule"/>
</dbReference>
<dbReference type="GO" id="GO:0005852">
    <property type="term" value="C:eukaryotic translation initiation factor 3 complex"/>
    <property type="evidence" value="ECO:0007669"/>
    <property type="project" value="UniProtKB-UniRule"/>
</dbReference>
<dbReference type="GO" id="GO:0003723">
    <property type="term" value="F:RNA binding"/>
    <property type="evidence" value="ECO:0007669"/>
    <property type="project" value="UniProtKB-UniRule"/>
</dbReference>
<dbReference type="GO" id="GO:0003743">
    <property type="term" value="F:translation initiation factor activity"/>
    <property type="evidence" value="ECO:0007669"/>
    <property type="project" value="UniProtKB-UniRule"/>
</dbReference>
<dbReference type="GO" id="GO:0001732">
    <property type="term" value="P:formation of cytoplasmic translation initiation complex"/>
    <property type="evidence" value="ECO:0007669"/>
    <property type="project" value="UniProtKB-UniRule"/>
</dbReference>
<dbReference type="CDD" id="cd12933">
    <property type="entry name" value="eIF3G"/>
    <property type="match status" value="1"/>
</dbReference>
<dbReference type="CDD" id="cd12408">
    <property type="entry name" value="RRM_eIF3G_like"/>
    <property type="match status" value="1"/>
</dbReference>
<dbReference type="FunFam" id="3.30.70.330:FF:000328">
    <property type="entry name" value="Eukaryotic translation initiation factor 3 subunit G"/>
    <property type="match status" value="1"/>
</dbReference>
<dbReference type="Gene3D" id="3.30.70.330">
    <property type="match status" value="1"/>
</dbReference>
<dbReference type="HAMAP" id="MF_03006">
    <property type="entry name" value="eIF3g"/>
    <property type="match status" value="1"/>
</dbReference>
<dbReference type="InterPro" id="IPR017334">
    <property type="entry name" value="eIF3_g"/>
</dbReference>
<dbReference type="InterPro" id="IPR024675">
    <property type="entry name" value="eIF3g_N"/>
</dbReference>
<dbReference type="InterPro" id="IPR034240">
    <property type="entry name" value="eIF3G_RRM"/>
</dbReference>
<dbReference type="InterPro" id="IPR012677">
    <property type="entry name" value="Nucleotide-bd_a/b_plait_sf"/>
</dbReference>
<dbReference type="InterPro" id="IPR035979">
    <property type="entry name" value="RBD_domain_sf"/>
</dbReference>
<dbReference type="InterPro" id="IPR000504">
    <property type="entry name" value="RRM_dom"/>
</dbReference>
<dbReference type="PANTHER" id="PTHR10352">
    <property type="entry name" value="EUKARYOTIC TRANSLATION INITIATION FACTOR 3 SUBUNIT G"/>
    <property type="match status" value="1"/>
</dbReference>
<dbReference type="Pfam" id="PF12353">
    <property type="entry name" value="eIF3g"/>
    <property type="match status" value="1"/>
</dbReference>
<dbReference type="Pfam" id="PF00076">
    <property type="entry name" value="RRM_1"/>
    <property type="match status" value="1"/>
</dbReference>
<dbReference type="PIRSF" id="PIRSF037949">
    <property type="entry name" value="Transl_init_eIF-3_RNA-bind"/>
    <property type="match status" value="1"/>
</dbReference>
<dbReference type="SMART" id="SM00360">
    <property type="entry name" value="RRM"/>
    <property type="match status" value="1"/>
</dbReference>
<dbReference type="SUPFAM" id="SSF54928">
    <property type="entry name" value="RNA-binding domain, RBD"/>
    <property type="match status" value="1"/>
</dbReference>
<dbReference type="PROSITE" id="PS50102">
    <property type="entry name" value="RRM"/>
    <property type="match status" value="1"/>
</dbReference>
<organism>
    <name type="scientific">Coccidioides immitis (strain RS)</name>
    <name type="common">Valley fever fungus</name>
    <dbReference type="NCBI Taxonomy" id="246410"/>
    <lineage>
        <taxon>Eukaryota</taxon>
        <taxon>Fungi</taxon>
        <taxon>Dikarya</taxon>
        <taxon>Ascomycota</taxon>
        <taxon>Pezizomycotina</taxon>
        <taxon>Eurotiomycetes</taxon>
        <taxon>Eurotiomycetidae</taxon>
        <taxon>Onygenales</taxon>
        <taxon>Onygenaceae</taxon>
        <taxon>Coccidioides</taxon>
    </lineage>
</organism>
<comment type="function">
    <text evidence="1">RNA-binding component of the eukaryotic translation initiation factor 3 (eIF-3) complex, which is involved in protein synthesis of a specialized repertoire of mRNAs and, together with other initiation factors, stimulates binding of mRNA and methionyl-tRNAi to the 40S ribosome. The eIF-3 complex specifically targets and initiates translation of a subset of mRNAs involved in cell proliferation. This subunit can bind 18S rRNA.</text>
</comment>
<comment type="subunit">
    <text evidence="1">Component of the eukaryotic translation initiation factor 3 (eIF-3) complex.</text>
</comment>
<comment type="subcellular location">
    <subcellularLocation>
        <location evidence="1">Cytoplasm</location>
    </subcellularLocation>
</comment>
<comment type="similarity">
    <text evidence="1">Belongs to the eIF-3 subunit G family.</text>
</comment>
<name>EIF3G_COCIM</name>
<accession>Q1DPD9</accession>
<accession>J3K4W7</accession>
<evidence type="ECO:0000255" key="1">
    <source>
        <dbReference type="HAMAP-Rule" id="MF_03006"/>
    </source>
</evidence>
<evidence type="ECO:0000256" key="2">
    <source>
        <dbReference type="SAM" id="MobiDB-lite"/>
    </source>
</evidence>
<sequence length="289" mass="31774">MSRLANSAGDWADDEEFDEAASLPPQQVISNKDGTKTVITYRFNDDGKKVKTTRRIRTTVVKEHVNPRVAERKAWAKFGLEKDHAPGPSLDTTSVGENIIFRPSVNWKAQAKEVEKAGGEKGGLKDQLKDKKVKCRICSGEHFTARCPFKDTMAPVDEPTGPTGGDNEDEERPAGALGSGATAYVPPALRKGGSGGEKMAGRYERDELATLRVTNVSELAEEGELRDMFGRFGHVTRVFLAKDKETNMAKGFAFISFADRADAARACEKMDGFGYRHLILRVEFAKKTT</sequence>
<gene>
    <name evidence="1" type="primary">TIF35</name>
    <name type="ORF">CIMG_07824</name>
</gene>
<protein>
    <recommendedName>
        <fullName evidence="1">Eukaryotic translation initiation factor 3 subunit G</fullName>
        <shortName evidence="1">eIF3g</shortName>
    </recommendedName>
    <alternativeName>
        <fullName evidence="1">Eukaryotic translation initiation factor 3 RNA-binding subunit</fullName>
        <shortName evidence="1">eIF-3 RNA-binding subunit</shortName>
    </alternativeName>
    <alternativeName>
        <fullName evidence="1">Translation initiation factor eIF3 p33 subunit homolog</fullName>
        <shortName evidence="1">eIF3 p33 homolog</shortName>
    </alternativeName>
</protein>
<feature type="chain" id="PRO_0000365441" description="Eukaryotic translation initiation factor 3 subunit G">
    <location>
        <begin position="1"/>
        <end position="289"/>
    </location>
</feature>
<feature type="domain" description="RRM" evidence="1">
    <location>
        <begin position="209"/>
        <end position="287"/>
    </location>
</feature>
<feature type="region of interest" description="Disordered" evidence="2">
    <location>
        <begin position="1"/>
        <end position="31"/>
    </location>
</feature>
<feature type="region of interest" description="Disordered" evidence="2">
    <location>
        <begin position="151"/>
        <end position="199"/>
    </location>
</feature>